<feature type="chain" id="PRO_0000117159" description="tRNA uridine 5-carboxymethylaminomethyl modification enzyme MnmG">
    <location>
        <begin position="1"/>
        <end position="647"/>
    </location>
</feature>
<feature type="binding site" evidence="1">
    <location>
        <begin position="13"/>
        <end position="18"/>
    </location>
    <ligand>
        <name>FAD</name>
        <dbReference type="ChEBI" id="CHEBI:57692"/>
    </ligand>
</feature>
<feature type="binding site" evidence="1">
    <location>
        <begin position="274"/>
        <end position="288"/>
    </location>
    <ligand>
        <name>NAD(+)</name>
        <dbReference type="ChEBI" id="CHEBI:57540"/>
    </ligand>
</feature>
<name>MNMG_RALN1</name>
<gene>
    <name evidence="1" type="primary">mnmG</name>
    <name evidence="1" type="synonym">gidA</name>
    <name type="ordered locus">RSc3328</name>
    <name type="ORF">RS02562</name>
</gene>
<reference key="1">
    <citation type="journal article" date="2002" name="Nature">
        <title>Genome sequence of the plant pathogen Ralstonia solanacearum.</title>
        <authorList>
            <person name="Salanoubat M."/>
            <person name="Genin S."/>
            <person name="Artiguenave F."/>
            <person name="Gouzy J."/>
            <person name="Mangenot S."/>
            <person name="Arlat M."/>
            <person name="Billault A."/>
            <person name="Brottier P."/>
            <person name="Camus J.-C."/>
            <person name="Cattolico L."/>
            <person name="Chandler M."/>
            <person name="Choisne N."/>
            <person name="Claudel-Renard C."/>
            <person name="Cunnac S."/>
            <person name="Demange N."/>
            <person name="Gaspin C."/>
            <person name="Lavie M."/>
            <person name="Moisan A."/>
            <person name="Robert C."/>
            <person name="Saurin W."/>
            <person name="Schiex T."/>
            <person name="Siguier P."/>
            <person name="Thebault P."/>
            <person name="Whalen M."/>
            <person name="Wincker P."/>
            <person name="Levy M."/>
            <person name="Weissenbach J."/>
            <person name="Boucher C.A."/>
        </authorList>
    </citation>
    <scope>NUCLEOTIDE SEQUENCE [LARGE SCALE GENOMIC DNA]</scope>
    <source>
        <strain>ATCC BAA-1114 / GMI1000</strain>
    </source>
</reference>
<evidence type="ECO:0000255" key="1">
    <source>
        <dbReference type="HAMAP-Rule" id="MF_00129"/>
    </source>
</evidence>
<accession>Q8XU65</accession>
<organism>
    <name type="scientific">Ralstonia nicotianae (strain ATCC BAA-1114 / GMI1000)</name>
    <name type="common">Ralstonia solanacearum</name>
    <dbReference type="NCBI Taxonomy" id="267608"/>
    <lineage>
        <taxon>Bacteria</taxon>
        <taxon>Pseudomonadati</taxon>
        <taxon>Pseudomonadota</taxon>
        <taxon>Betaproteobacteria</taxon>
        <taxon>Burkholderiales</taxon>
        <taxon>Burkholderiaceae</taxon>
        <taxon>Ralstonia</taxon>
        <taxon>Ralstonia solanacearum species complex</taxon>
    </lineage>
</organism>
<protein>
    <recommendedName>
        <fullName evidence="1">tRNA uridine 5-carboxymethylaminomethyl modification enzyme MnmG</fullName>
    </recommendedName>
    <alternativeName>
        <fullName evidence="1">Glucose-inhibited division protein A</fullName>
    </alternativeName>
</protein>
<proteinExistence type="inferred from homology"/>
<comment type="function">
    <text evidence="1">NAD-binding protein involved in the addition of a carboxymethylaminomethyl (cmnm) group at the wobble position (U34) of certain tRNAs, forming tRNA-cmnm(5)s(2)U34.</text>
</comment>
<comment type="cofactor">
    <cofactor evidence="1">
        <name>FAD</name>
        <dbReference type="ChEBI" id="CHEBI:57692"/>
    </cofactor>
</comment>
<comment type="subunit">
    <text evidence="1">Homodimer. Heterotetramer of two MnmE and two MnmG subunits.</text>
</comment>
<comment type="subcellular location">
    <subcellularLocation>
        <location evidence="1">Cytoplasm</location>
    </subcellularLocation>
</comment>
<comment type="similarity">
    <text evidence="1">Belongs to the MnmG family.</text>
</comment>
<keyword id="KW-0963">Cytoplasm</keyword>
<keyword id="KW-0274">FAD</keyword>
<keyword id="KW-0285">Flavoprotein</keyword>
<keyword id="KW-0520">NAD</keyword>
<keyword id="KW-1185">Reference proteome</keyword>
<keyword id="KW-0819">tRNA processing</keyword>
<dbReference type="EMBL" id="AL646052">
    <property type="protein sequence ID" value="CAD17116.1"/>
    <property type="molecule type" value="Genomic_DNA"/>
</dbReference>
<dbReference type="RefSeq" id="WP_011003211.1">
    <property type="nucleotide sequence ID" value="NC_003295.1"/>
</dbReference>
<dbReference type="SMR" id="Q8XU65"/>
<dbReference type="STRING" id="267608.RSc3328"/>
<dbReference type="EnsemblBacteria" id="CAD17116">
    <property type="protein sequence ID" value="CAD17116"/>
    <property type="gene ID" value="RSc3328"/>
</dbReference>
<dbReference type="KEGG" id="rso:RSc3328"/>
<dbReference type="PATRIC" id="fig|267608.8.peg.3377"/>
<dbReference type="eggNOG" id="COG0445">
    <property type="taxonomic scope" value="Bacteria"/>
</dbReference>
<dbReference type="HOGENOM" id="CLU_007831_2_2_4"/>
<dbReference type="Proteomes" id="UP000001436">
    <property type="component" value="Chromosome"/>
</dbReference>
<dbReference type="GO" id="GO:0005829">
    <property type="term" value="C:cytosol"/>
    <property type="evidence" value="ECO:0007669"/>
    <property type="project" value="TreeGrafter"/>
</dbReference>
<dbReference type="GO" id="GO:0050660">
    <property type="term" value="F:flavin adenine dinucleotide binding"/>
    <property type="evidence" value="ECO:0007669"/>
    <property type="project" value="UniProtKB-UniRule"/>
</dbReference>
<dbReference type="GO" id="GO:0030488">
    <property type="term" value="P:tRNA methylation"/>
    <property type="evidence" value="ECO:0007669"/>
    <property type="project" value="TreeGrafter"/>
</dbReference>
<dbReference type="GO" id="GO:0002098">
    <property type="term" value="P:tRNA wobble uridine modification"/>
    <property type="evidence" value="ECO:0007669"/>
    <property type="project" value="InterPro"/>
</dbReference>
<dbReference type="FunFam" id="1.10.10.1800:FF:000001">
    <property type="entry name" value="tRNA uridine 5-carboxymethylaminomethyl modification enzyme MnmG"/>
    <property type="match status" value="1"/>
</dbReference>
<dbReference type="FunFam" id="1.10.150.570:FF:000001">
    <property type="entry name" value="tRNA uridine 5-carboxymethylaminomethyl modification enzyme MnmG"/>
    <property type="match status" value="1"/>
</dbReference>
<dbReference type="FunFam" id="3.50.50.60:FF:000002">
    <property type="entry name" value="tRNA uridine 5-carboxymethylaminomethyl modification enzyme MnmG"/>
    <property type="match status" value="1"/>
</dbReference>
<dbReference type="FunFam" id="3.50.50.60:FF:000010">
    <property type="entry name" value="tRNA uridine 5-carboxymethylaminomethyl modification enzyme MnmG"/>
    <property type="match status" value="1"/>
</dbReference>
<dbReference type="Gene3D" id="3.50.50.60">
    <property type="entry name" value="FAD/NAD(P)-binding domain"/>
    <property type="match status" value="2"/>
</dbReference>
<dbReference type="Gene3D" id="1.10.150.570">
    <property type="entry name" value="GidA associated domain, C-terminal subdomain"/>
    <property type="match status" value="1"/>
</dbReference>
<dbReference type="Gene3D" id="1.10.10.1800">
    <property type="entry name" value="tRNA uridine 5-carboxymethylaminomethyl modification enzyme MnmG/GidA"/>
    <property type="match status" value="1"/>
</dbReference>
<dbReference type="HAMAP" id="MF_00129">
    <property type="entry name" value="MnmG_GidA"/>
    <property type="match status" value="1"/>
</dbReference>
<dbReference type="InterPro" id="IPR036188">
    <property type="entry name" value="FAD/NAD-bd_sf"/>
</dbReference>
<dbReference type="InterPro" id="IPR049312">
    <property type="entry name" value="GIDA_C_N"/>
</dbReference>
<dbReference type="InterPro" id="IPR004416">
    <property type="entry name" value="MnmG"/>
</dbReference>
<dbReference type="InterPro" id="IPR002218">
    <property type="entry name" value="MnmG-rel"/>
</dbReference>
<dbReference type="InterPro" id="IPR020595">
    <property type="entry name" value="MnmG-rel_CS"/>
</dbReference>
<dbReference type="InterPro" id="IPR026904">
    <property type="entry name" value="MnmG_C"/>
</dbReference>
<dbReference type="InterPro" id="IPR047001">
    <property type="entry name" value="MnmG_C_subdom"/>
</dbReference>
<dbReference type="InterPro" id="IPR044920">
    <property type="entry name" value="MnmG_C_subdom_sf"/>
</dbReference>
<dbReference type="InterPro" id="IPR040131">
    <property type="entry name" value="MnmG_N"/>
</dbReference>
<dbReference type="NCBIfam" id="TIGR00136">
    <property type="entry name" value="mnmG_gidA"/>
    <property type="match status" value="1"/>
</dbReference>
<dbReference type="PANTHER" id="PTHR11806">
    <property type="entry name" value="GLUCOSE INHIBITED DIVISION PROTEIN A"/>
    <property type="match status" value="1"/>
</dbReference>
<dbReference type="PANTHER" id="PTHR11806:SF0">
    <property type="entry name" value="PROTEIN MTO1 HOMOLOG, MITOCHONDRIAL"/>
    <property type="match status" value="1"/>
</dbReference>
<dbReference type="Pfam" id="PF01134">
    <property type="entry name" value="GIDA"/>
    <property type="match status" value="1"/>
</dbReference>
<dbReference type="Pfam" id="PF21680">
    <property type="entry name" value="GIDA_C_1st"/>
    <property type="match status" value="1"/>
</dbReference>
<dbReference type="Pfam" id="PF13932">
    <property type="entry name" value="SAM_GIDA_C"/>
    <property type="match status" value="1"/>
</dbReference>
<dbReference type="SMART" id="SM01228">
    <property type="entry name" value="GIDA_assoc_3"/>
    <property type="match status" value="1"/>
</dbReference>
<dbReference type="SUPFAM" id="SSF51905">
    <property type="entry name" value="FAD/NAD(P)-binding domain"/>
    <property type="match status" value="1"/>
</dbReference>
<dbReference type="PROSITE" id="PS01280">
    <property type="entry name" value="GIDA_1"/>
    <property type="match status" value="1"/>
</dbReference>
<dbReference type="PROSITE" id="PS01281">
    <property type="entry name" value="GIDA_2"/>
    <property type="match status" value="1"/>
</dbReference>
<sequence>MLYPVEFDVIVVGGGHAGTEAALAAARMGCQTLLLTHNIETLGQMSCNPSIGGIGKGHLVKEVDALGGAMALATDEGGIQFRILNSSKGPAVRATRAQADRVLYKAAIRHRLENQPNLMLFQQAVEDLLVEGDRVVGAVTQVGVRFRARAVVLTAGTFLDGKIHVGLNNYTGGRAGDPAAVSLSARLKELKLPQGRLKTGTPPRIDGRTIDFSVLEAQPGDLDPVPVFSFLGRTDMHPRQVPCWVTHTNERTHDIIRAGLNRSPMYTGVIEGVGPRYCPSIEDKIHRFASKDSHQIFLEPEGLTTNEFYPNGVSTSLPFDVQLDLIHSMRGLEHAHILRPGYAIEYDYFDPRGLKASLESKAIGGLFFAGQINGTTGYEEAAAQGLLAGINAGLQVQGKAAWTPRRDQAYLGVLVDDLITRGVTEPYRMFTSRAEFRLSLREDNADMRLTEAGRDLGVVDDARWDAFNRKRDAVSRETERLKSTWVNPAILPAADAEPVLGKGIEREYSLADLLRRPNVTYESLMGMQGGKYAPDAPLADEPLLAEQIREQIEIGIKYHGYIARQADEVERLGANENTRLPADFDYKQVRGLSIEVQQKLAQHKPETIGQASRISGITPAAVSLLLVHLKKGVLRGKVGPRSEGEAA</sequence>